<reference key="1">
    <citation type="journal article" date="2007" name="BMC Plant Biol.">
        <title>Complete plastid genome sequences suggest strong selection for retention of photosynthetic genes in the parasitic plant genus Cuscuta.</title>
        <authorList>
            <person name="McNeal J.R."/>
            <person name="Kuehl J.V."/>
            <person name="Boore J.L."/>
            <person name="dePamphilis C.W."/>
        </authorList>
    </citation>
    <scope>NUCLEOTIDE SEQUENCE [LARGE SCALE GENOMIC DNA]</scope>
</reference>
<evidence type="ECO:0000255" key="1">
    <source>
        <dbReference type="HAMAP-Rule" id="MF_01398"/>
    </source>
</evidence>
<dbReference type="EMBL" id="EU189132">
    <property type="protein sequence ID" value="ABW83681.1"/>
    <property type="molecule type" value="Genomic_DNA"/>
</dbReference>
<dbReference type="RefSeq" id="YP_001542517.1">
    <property type="nucleotide sequence ID" value="NC_009963.1"/>
</dbReference>
<dbReference type="SMR" id="A8W3B0"/>
<dbReference type="GeneID" id="5729620"/>
<dbReference type="GO" id="GO:0009535">
    <property type="term" value="C:chloroplast thylakoid membrane"/>
    <property type="evidence" value="ECO:0007669"/>
    <property type="project" value="UniProtKB-SubCell"/>
</dbReference>
<dbReference type="GO" id="GO:0045259">
    <property type="term" value="C:proton-transporting ATP synthase complex"/>
    <property type="evidence" value="ECO:0007669"/>
    <property type="project" value="UniProtKB-KW"/>
</dbReference>
<dbReference type="GO" id="GO:0046933">
    <property type="term" value="F:proton-transporting ATP synthase activity, rotational mechanism"/>
    <property type="evidence" value="ECO:0007669"/>
    <property type="project" value="UniProtKB-UniRule"/>
</dbReference>
<dbReference type="CDD" id="cd06503">
    <property type="entry name" value="ATP-synt_Fo_b"/>
    <property type="match status" value="1"/>
</dbReference>
<dbReference type="HAMAP" id="MF_01398">
    <property type="entry name" value="ATP_synth_b_bprime"/>
    <property type="match status" value="1"/>
</dbReference>
<dbReference type="InterPro" id="IPR002146">
    <property type="entry name" value="ATP_synth_b/b'su_bac/chlpt"/>
</dbReference>
<dbReference type="PANTHER" id="PTHR34264">
    <property type="entry name" value="ATP SYNTHASE SUBUNIT B, CHLOROPLASTIC"/>
    <property type="match status" value="1"/>
</dbReference>
<dbReference type="PANTHER" id="PTHR34264:SF3">
    <property type="entry name" value="ATP SYNTHASE SUBUNIT B, CHLOROPLASTIC"/>
    <property type="match status" value="1"/>
</dbReference>
<dbReference type="Pfam" id="PF00430">
    <property type="entry name" value="ATP-synt_B"/>
    <property type="match status" value="1"/>
</dbReference>
<gene>
    <name evidence="1" type="primary">atpF</name>
</gene>
<geneLocation type="chloroplast"/>
<feature type="chain" id="PRO_0000368925" description="ATP synthase subunit b, chloroplastic">
    <location>
        <begin position="1"/>
        <end position="184"/>
    </location>
</feature>
<feature type="transmembrane region" description="Helical" evidence="1">
    <location>
        <begin position="27"/>
        <end position="49"/>
    </location>
</feature>
<keyword id="KW-0066">ATP synthesis</keyword>
<keyword id="KW-0138">CF(0)</keyword>
<keyword id="KW-0150">Chloroplast</keyword>
<keyword id="KW-0375">Hydrogen ion transport</keyword>
<keyword id="KW-0406">Ion transport</keyword>
<keyword id="KW-0472">Membrane</keyword>
<keyword id="KW-0934">Plastid</keyword>
<keyword id="KW-0793">Thylakoid</keyword>
<keyword id="KW-0812">Transmembrane</keyword>
<keyword id="KW-1133">Transmembrane helix</keyword>
<keyword id="KW-0813">Transport</keyword>
<proteinExistence type="inferred from homology"/>
<accession>A8W3B0</accession>
<protein>
    <recommendedName>
        <fullName evidence="1">ATP synthase subunit b, chloroplastic</fullName>
    </recommendedName>
    <alternativeName>
        <fullName evidence="1">ATP synthase F(0) sector subunit b</fullName>
    </alternativeName>
    <alternativeName>
        <fullName evidence="1">ATPase subunit I</fullName>
    </alternativeName>
</protein>
<name>ATPF_CUSEX</name>
<organism>
    <name type="scientific">Cuscuta exaltata</name>
    <name type="common">Tall dodder</name>
    <dbReference type="NCBI Taxonomy" id="476139"/>
    <lineage>
        <taxon>Eukaryota</taxon>
        <taxon>Viridiplantae</taxon>
        <taxon>Streptophyta</taxon>
        <taxon>Embryophyta</taxon>
        <taxon>Tracheophyta</taxon>
        <taxon>Spermatophyta</taxon>
        <taxon>Magnoliopsida</taxon>
        <taxon>eudicotyledons</taxon>
        <taxon>Gunneridae</taxon>
        <taxon>Pentapetalae</taxon>
        <taxon>asterids</taxon>
        <taxon>lamiids</taxon>
        <taxon>Solanales</taxon>
        <taxon>Convolvulaceae</taxon>
        <taxon>Cuscuteae</taxon>
        <taxon>Cuscuta</taxon>
        <taxon>Cuscuta subgen. Monogynella</taxon>
    </lineage>
</organism>
<comment type="function">
    <text evidence="1">F(1)F(0) ATP synthase produces ATP from ADP in the presence of a proton or sodium gradient. F-type ATPases consist of two structural domains, F(1) containing the extramembraneous catalytic core and F(0) containing the membrane proton channel, linked together by a central stalk and a peripheral stalk. During catalysis, ATP synthesis in the catalytic domain of F(1) is coupled via a rotary mechanism of the central stalk subunits to proton translocation.</text>
</comment>
<comment type="function">
    <text evidence="1">Component of the F(0) channel, it forms part of the peripheral stalk, linking F(1) to F(0).</text>
</comment>
<comment type="subunit">
    <text evidence="1">F-type ATPases have 2 components, F(1) - the catalytic core - and F(0) - the membrane proton channel. F(1) has five subunits: alpha(3), beta(3), gamma(1), delta(1), epsilon(1). F(0) has four main subunits: a(1), b(1), b'(1) and c(10-14). The alpha and beta chains form an alternating ring which encloses part of the gamma chain. F(1) is attached to F(0) by a central stalk formed by the gamma and epsilon chains, while a peripheral stalk is formed by the delta, b and b' chains.</text>
</comment>
<comment type="subcellular location">
    <subcellularLocation>
        <location evidence="1">Plastid</location>
        <location evidence="1">Chloroplast thylakoid membrane</location>
        <topology evidence="1">Single-pass membrane protein</topology>
    </subcellularLocation>
</comment>
<comment type="miscellaneous">
    <text>In plastids the F-type ATPase is also known as CF(1)CF(0).</text>
</comment>
<comment type="similarity">
    <text evidence="1">Belongs to the ATPase B chain family.</text>
</comment>
<sequence length="184" mass="20829">MKNVTDSFLSLGHWSSAGSFGLNTDILATNPINLSVVLGVLIFFGKGVLSDLLDNRKQRILKTIQNSEELGVGAVEKLEKARSRLRKVKTEAEQFLVNGYSDIEREKFNLIKSTSNTLEQLENDKNETLRFEQQRLIYQVRQRFFQQALQRAIGTLNSCLNNELHLRTISANIGMLGTIKEITD</sequence>